<comment type="function">
    <text evidence="1">Transforms N(2)-succinylglutamate into succinate and glutamate.</text>
</comment>
<comment type="catalytic activity">
    <reaction evidence="1">
        <text>N-succinyl-L-glutamate + H2O = L-glutamate + succinate</text>
        <dbReference type="Rhea" id="RHEA:15169"/>
        <dbReference type="ChEBI" id="CHEBI:15377"/>
        <dbReference type="ChEBI" id="CHEBI:29985"/>
        <dbReference type="ChEBI" id="CHEBI:30031"/>
        <dbReference type="ChEBI" id="CHEBI:58763"/>
        <dbReference type="EC" id="3.5.1.96"/>
    </reaction>
</comment>
<comment type="cofactor">
    <cofactor evidence="1">
        <name>Zn(2+)</name>
        <dbReference type="ChEBI" id="CHEBI:29105"/>
    </cofactor>
    <text evidence="1">Binds 1 zinc ion per subunit.</text>
</comment>
<comment type="pathway">
    <text evidence="1">Amino-acid degradation; L-arginine degradation via AST pathway; L-glutamate and succinate from L-arginine: step 5/5.</text>
</comment>
<comment type="similarity">
    <text evidence="1">Belongs to the AspA/AstE family. Succinylglutamate desuccinylase subfamily.</text>
</comment>
<sequence length="332" mass="37013">MLALGKLLDLTLAGREPTEKIQLTADGTRLHWLAEGALEVTPIGARDNGVDLLLSAGIHGNETAPIELLERLVRKLASGELKPAARVLFLLGNPEAIRRGERFVEQDMNRLFNGRHEEGSGNEAFRAAELERLAQVFFSRGERDRLHYDLHTAIRGSRIEQFALYPWAEGREHSRAELARLRDAGIEAVLLQNKPGITFSAYTYGQLGAEAFTLELGKARPFGQNQQVNLERLERRLEMLIDGSEERPDGAHLDGLKLFSVSREVIKHSDHFRLHLDDDVANFTELSPGYLLAEDIGGTRWVVDEVGARIIFPNPRVKNGLRAGILVVPAKL</sequence>
<protein>
    <recommendedName>
        <fullName evidence="1">Succinylglutamate desuccinylase</fullName>
        <ecNumber evidence="1">3.5.1.96</ecNumber>
    </recommendedName>
</protein>
<proteinExistence type="inferred from homology"/>
<name>ASTE_PSEP7</name>
<organism>
    <name type="scientific">Pseudomonas paraeruginosa (strain DSM 24068 / PA7)</name>
    <name type="common">Pseudomonas aeruginosa (strain PA7)</name>
    <dbReference type="NCBI Taxonomy" id="381754"/>
    <lineage>
        <taxon>Bacteria</taxon>
        <taxon>Pseudomonadati</taxon>
        <taxon>Pseudomonadota</taxon>
        <taxon>Gammaproteobacteria</taxon>
        <taxon>Pseudomonadales</taxon>
        <taxon>Pseudomonadaceae</taxon>
        <taxon>Pseudomonas</taxon>
        <taxon>Pseudomonas paraeruginosa</taxon>
    </lineage>
</organism>
<feature type="chain" id="PRO_1000017323" description="Succinylglutamate desuccinylase">
    <location>
        <begin position="1"/>
        <end position="332"/>
    </location>
</feature>
<feature type="active site" evidence="1">
    <location>
        <position position="215"/>
    </location>
</feature>
<feature type="binding site" evidence="1">
    <location>
        <position position="59"/>
    </location>
    <ligand>
        <name>Zn(2+)</name>
        <dbReference type="ChEBI" id="CHEBI:29105"/>
    </ligand>
</feature>
<feature type="binding site" evidence="1">
    <location>
        <position position="62"/>
    </location>
    <ligand>
        <name>Zn(2+)</name>
        <dbReference type="ChEBI" id="CHEBI:29105"/>
    </ligand>
</feature>
<feature type="binding site" evidence="1">
    <location>
        <position position="151"/>
    </location>
    <ligand>
        <name>Zn(2+)</name>
        <dbReference type="ChEBI" id="CHEBI:29105"/>
    </ligand>
</feature>
<accession>A6VA73</accession>
<reference key="1">
    <citation type="submission" date="2007-06" db="EMBL/GenBank/DDBJ databases">
        <authorList>
            <person name="Dodson R.J."/>
            <person name="Harkins D."/>
            <person name="Paulsen I.T."/>
        </authorList>
    </citation>
    <scope>NUCLEOTIDE SEQUENCE [LARGE SCALE GENOMIC DNA]</scope>
    <source>
        <strain>DSM 24068 / PA7</strain>
    </source>
</reference>
<gene>
    <name evidence="1" type="primary">astE</name>
    <name type="ordered locus">PSPA7_4614</name>
</gene>
<keyword id="KW-0056">Arginine metabolism</keyword>
<keyword id="KW-0378">Hydrolase</keyword>
<keyword id="KW-0479">Metal-binding</keyword>
<keyword id="KW-0862">Zinc</keyword>
<dbReference type="EC" id="3.5.1.96" evidence="1"/>
<dbReference type="EMBL" id="CP000744">
    <property type="protein sequence ID" value="ABR86252.1"/>
    <property type="molecule type" value="Genomic_DNA"/>
</dbReference>
<dbReference type="RefSeq" id="WP_012076936.1">
    <property type="nucleotide sequence ID" value="NC_009656.1"/>
</dbReference>
<dbReference type="SMR" id="A6VA73"/>
<dbReference type="KEGG" id="pap:PSPA7_4614"/>
<dbReference type="HOGENOM" id="CLU_071608_0_0_6"/>
<dbReference type="UniPathway" id="UPA00185">
    <property type="reaction ID" value="UER00283"/>
</dbReference>
<dbReference type="Proteomes" id="UP000001582">
    <property type="component" value="Chromosome"/>
</dbReference>
<dbReference type="GO" id="GO:0016788">
    <property type="term" value="F:hydrolase activity, acting on ester bonds"/>
    <property type="evidence" value="ECO:0007669"/>
    <property type="project" value="UniProtKB-UniRule"/>
</dbReference>
<dbReference type="GO" id="GO:0009017">
    <property type="term" value="F:succinylglutamate desuccinylase activity"/>
    <property type="evidence" value="ECO:0007669"/>
    <property type="project" value="UniProtKB-EC"/>
</dbReference>
<dbReference type="GO" id="GO:0008270">
    <property type="term" value="F:zinc ion binding"/>
    <property type="evidence" value="ECO:0007669"/>
    <property type="project" value="UniProtKB-UniRule"/>
</dbReference>
<dbReference type="GO" id="GO:0019544">
    <property type="term" value="P:arginine catabolic process to glutamate"/>
    <property type="evidence" value="ECO:0007669"/>
    <property type="project" value="UniProtKB-UniRule"/>
</dbReference>
<dbReference type="GO" id="GO:0019545">
    <property type="term" value="P:arginine catabolic process to succinate"/>
    <property type="evidence" value="ECO:0007669"/>
    <property type="project" value="UniProtKB-UniRule"/>
</dbReference>
<dbReference type="CDD" id="cd03855">
    <property type="entry name" value="M14_ASTE"/>
    <property type="match status" value="1"/>
</dbReference>
<dbReference type="FunFam" id="3.40.630.10:FF:000017">
    <property type="entry name" value="Succinylglutamate desuccinylase"/>
    <property type="match status" value="1"/>
</dbReference>
<dbReference type="Gene3D" id="3.40.630.10">
    <property type="entry name" value="Zn peptidases"/>
    <property type="match status" value="1"/>
</dbReference>
<dbReference type="HAMAP" id="MF_00767">
    <property type="entry name" value="Arg_catab_AstE"/>
    <property type="match status" value="1"/>
</dbReference>
<dbReference type="InterPro" id="IPR050178">
    <property type="entry name" value="AspA/AstE_fam"/>
</dbReference>
<dbReference type="InterPro" id="IPR055438">
    <property type="entry name" value="AstE_AspA_cat"/>
</dbReference>
<dbReference type="InterPro" id="IPR007036">
    <property type="entry name" value="Aste_AspA_hybrid_dom"/>
</dbReference>
<dbReference type="InterPro" id="IPR016681">
    <property type="entry name" value="SuccinylGlu_desuccinylase"/>
</dbReference>
<dbReference type="NCBIfam" id="TIGR03242">
    <property type="entry name" value="arg_catab_astE"/>
    <property type="match status" value="1"/>
</dbReference>
<dbReference type="NCBIfam" id="NF003706">
    <property type="entry name" value="PRK05324.1"/>
    <property type="match status" value="1"/>
</dbReference>
<dbReference type="PANTHER" id="PTHR15162">
    <property type="entry name" value="ASPARTOACYLASE"/>
    <property type="match status" value="1"/>
</dbReference>
<dbReference type="PANTHER" id="PTHR15162:SF7">
    <property type="entry name" value="SUCCINYLGLUTAMATE DESUCCINYLASE"/>
    <property type="match status" value="1"/>
</dbReference>
<dbReference type="Pfam" id="PF24827">
    <property type="entry name" value="AstE_AspA_cat"/>
    <property type="match status" value="1"/>
</dbReference>
<dbReference type="Pfam" id="PF04952">
    <property type="entry name" value="AstE_AspA_hybrid"/>
    <property type="match status" value="1"/>
</dbReference>
<dbReference type="PIRSF" id="PIRSF017020">
    <property type="entry name" value="AstE"/>
    <property type="match status" value="1"/>
</dbReference>
<dbReference type="SUPFAM" id="SSF53187">
    <property type="entry name" value="Zn-dependent exopeptidases"/>
    <property type="match status" value="1"/>
</dbReference>
<evidence type="ECO:0000255" key="1">
    <source>
        <dbReference type="HAMAP-Rule" id="MF_00767"/>
    </source>
</evidence>